<sequence>MRSHYCGDVNKSHVGQEVTLVGWVNRSRDLGGVVFLDLRDREGLIQVVYDPDLPEVFNVASTLRAEFCVQVKGLVRARPDSQVNGQMKTGEIEVLGQALTIINAADPLPLSMDNYQNNSEEQRLKYRYLDLRRPEMAQRLIFRAKVTSSVRRFLDSNGFLDIETPILTKATPEGARDYLVPSRTYKGQFFALPQSPQLFKQLLMMSGFDRYYQIVKCFRDEDLRADRQPEFTQIDIETSFMSSEQVMAKTEEMMRGLFLEMLNVDLGEFPRMTYNEAMRRFGSDKPDLRNPLELVDIADLLKEVEFAVFSGPANDEEGRVAALRIPGGAALSRKQIDDYTKFVGIYGAKGLAWMKINDLSLGLEGIQSPVLKFLNESIVNEIVSRTAAQTGDIILFGADQATVVAESMGALRLKAGEDFNLLQGEWRPLWVVDFPMFEKINGNFHAVHHPFTAPRGVTAAELEANPANRVSDAYDMVLNGCELGGGSVRIHNQEMQSAVFRILGITDEEAKEKFGFLLEALRYGTPPHAGLAFGLDRIIMLMTGASSIRDVMAFPKTTTAACPLTNAPGFANPQQLAELGIAVVEKAVKTED</sequence>
<dbReference type="EC" id="6.1.1.12" evidence="1"/>
<dbReference type="EMBL" id="CP000891">
    <property type="protein sequence ID" value="ABX49591.1"/>
    <property type="molecule type" value="Genomic_DNA"/>
</dbReference>
<dbReference type="RefSeq" id="WP_006081745.1">
    <property type="nucleotide sequence ID" value="NC_009997.1"/>
</dbReference>
<dbReference type="SMR" id="A9L3I1"/>
<dbReference type="GeneID" id="11772540"/>
<dbReference type="KEGG" id="sbn:Sbal195_2423"/>
<dbReference type="HOGENOM" id="CLU_014330_3_2_6"/>
<dbReference type="Proteomes" id="UP000000770">
    <property type="component" value="Chromosome"/>
</dbReference>
<dbReference type="GO" id="GO:0005737">
    <property type="term" value="C:cytoplasm"/>
    <property type="evidence" value="ECO:0007669"/>
    <property type="project" value="UniProtKB-SubCell"/>
</dbReference>
<dbReference type="GO" id="GO:0004815">
    <property type="term" value="F:aspartate-tRNA ligase activity"/>
    <property type="evidence" value="ECO:0007669"/>
    <property type="project" value="UniProtKB-UniRule"/>
</dbReference>
<dbReference type="GO" id="GO:0005524">
    <property type="term" value="F:ATP binding"/>
    <property type="evidence" value="ECO:0007669"/>
    <property type="project" value="UniProtKB-UniRule"/>
</dbReference>
<dbReference type="GO" id="GO:0003676">
    <property type="term" value="F:nucleic acid binding"/>
    <property type="evidence" value="ECO:0007669"/>
    <property type="project" value="InterPro"/>
</dbReference>
<dbReference type="GO" id="GO:0006422">
    <property type="term" value="P:aspartyl-tRNA aminoacylation"/>
    <property type="evidence" value="ECO:0007669"/>
    <property type="project" value="UniProtKB-UniRule"/>
</dbReference>
<dbReference type="CDD" id="cd00777">
    <property type="entry name" value="AspRS_core"/>
    <property type="match status" value="1"/>
</dbReference>
<dbReference type="CDD" id="cd04317">
    <property type="entry name" value="EcAspRS_like_N"/>
    <property type="match status" value="1"/>
</dbReference>
<dbReference type="FunFam" id="2.40.50.140:FF:000080">
    <property type="entry name" value="Aspartate--tRNA ligase"/>
    <property type="match status" value="1"/>
</dbReference>
<dbReference type="Gene3D" id="3.30.930.10">
    <property type="entry name" value="Bira Bifunctional Protein, Domain 2"/>
    <property type="match status" value="1"/>
</dbReference>
<dbReference type="Gene3D" id="3.30.1360.30">
    <property type="entry name" value="GAD-like domain"/>
    <property type="match status" value="1"/>
</dbReference>
<dbReference type="Gene3D" id="2.40.50.140">
    <property type="entry name" value="Nucleic acid-binding proteins"/>
    <property type="match status" value="1"/>
</dbReference>
<dbReference type="HAMAP" id="MF_00044">
    <property type="entry name" value="Asp_tRNA_synth_type1"/>
    <property type="match status" value="1"/>
</dbReference>
<dbReference type="InterPro" id="IPR004364">
    <property type="entry name" value="Aa-tRNA-synt_II"/>
</dbReference>
<dbReference type="InterPro" id="IPR006195">
    <property type="entry name" value="aa-tRNA-synth_II"/>
</dbReference>
<dbReference type="InterPro" id="IPR045864">
    <property type="entry name" value="aa-tRNA-synth_II/BPL/LPL"/>
</dbReference>
<dbReference type="InterPro" id="IPR004524">
    <property type="entry name" value="Asp-tRNA-ligase_1"/>
</dbReference>
<dbReference type="InterPro" id="IPR047089">
    <property type="entry name" value="Asp-tRNA-ligase_1_N"/>
</dbReference>
<dbReference type="InterPro" id="IPR002312">
    <property type="entry name" value="Asp/Asn-tRNA-synth_IIb"/>
</dbReference>
<dbReference type="InterPro" id="IPR047090">
    <property type="entry name" value="AspRS_core"/>
</dbReference>
<dbReference type="InterPro" id="IPR004115">
    <property type="entry name" value="GAD-like_sf"/>
</dbReference>
<dbReference type="InterPro" id="IPR029351">
    <property type="entry name" value="GAD_dom"/>
</dbReference>
<dbReference type="InterPro" id="IPR012340">
    <property type="entry name" value="NA-bd_OB-fold"/>
</dbReference>
<dbReference type="InterPro" id="IPR004365">
    <property type="entry name" value="NA-bd_OB_tRNA"/>
</dbReference>
<dbReference type="NCBIfam" id="TIGR00459">
    <property type="entry name" value="aspS_bact"/>
    <property type="match status" value="1"/>
</dbReference>
<dbReference type="NCBIfam" id="NF001750">
    <property type="entry name" value="PRK00476.1"/>
    <property type="match status" value="1"/>
</dbReference>
<dbReference type="PANTHER" id="PTHR22594:SF5">
    <property type="entry name" value="ASPARTATE--TRNA LIGASE, MITOCHONDRIAL"/>
    <property type="match status" value="1"/>
</dbReference>
<dbReference type="PANTHER" id="PTHR22594">
    <property type="entry name" value="ASPARTYL/LYSYL-TRNA SYNTHETASE"/>
    <property type="match status" value="1"/>
</dbReference>
<dbReference type="Pfam" id="PF02938">
    <property type="entry name" value="GAD"/>
    <property type="match status" value="1"/>
</dbReference>
<dbReference type="Pfam" id="PF00152">
    <property type="entry name" value="tRNA-synt_2"/>
    <property type="match status" value="1"/>
</dbReference>
<dbReference type="Pfam" id="PF01336">
    <property type="entry name" value="tRNA_anti-codon"/>
    <property type="match status" value="1"/>
</dbReference>
<dbReference type="PRINTS" id="PR01042">
    <property type="entry name" value="TRNASYNTHASP"/>
</dbReference>
<dbReference type="SUPFAM" id="SSF55681">
    <property type="entry name" value="Class II aaRS and biotin synthetases"/>
    <property type="match status" value="1"/>
</dbReference>
<dbReference type="SUPFAM" id="SSF55261">
    <property type="entry name" value="GAD domain-like"/>
    <property type="match status" value="1"/>
</dbReference>
<dbReference type="SUPFAM" id="SSF50249">
    <property type="entry name" value="Nucleic acid-binding proteins"/>
    <property type="match status" value="1"/>
</dbReference>
<dbReference type="PROSITE" id="PS50862">
    <property type="entry name" value="AA_TRNA_LIGASE_II"/>
    <property type="match status" value="1"/>
</dbReference>
<reference key="1">
    <citation type="submission" date="2007-11" db="EMBL/GenBank/DDBJ databases">
        <title>Complete sequence of chromosome of Shewanella baltica OS195.</title>
        <authorList>
            <consortium name="US DOE Joint Genome Institute"/>
            <person name="Copeland A."/>
            <person name="Lucas S."/>
            <person name="Lapidus A."/>
            <person name="Barry K."/>
            <person name="Glavina del Rio T."/>
            <person name="Dalin E."/>
            <person name="Tice H."/>
            <person name="Pitluck S."/>
            <person name="Chain P."/>
            <person name="Malfatti S."/>
            <person name="Shin M."/>
            <person name="Vergez L."/>
            <person name="Schmutz J."/>
            <person name="Larimer F."/>
            <person name="Land M."/>
            <person name="Hauser L."/>
            <person name="Kyrpides N."/>
            <person name="Kim E."/>
            <person name="Brettar I."/>
            <person name="Rodrigues J."/>
            <person name="Konstantinidis K."/>
            <person name="Klappenbach J."/>
            <person name="Hofle M."/>
            <person name="Tiedje J."/>
            <person name="Richardson P."/>
        </authorList>
    </citation>
    <scope>NUCLEOTIDE SEQUENCE [LARGE SCALE GENOMIC DNA]</scope>
    <source>
        <strain>OS195</strain>
    </source>
</reference>
<gene>
    <name evidence="1" type="primary">aspS</name>
    <name type="ordered locus">Sbal195_2423</name>
</gene>
<accession>A9L3I1</accession>
<proteinExistence type="inferred from homology"/>
<protein>
    <recommendedName>
        <fullName evidence="1">Aspartate--tRNA ligase</fullName>
        <ecNumber evidence="1">6.1.1.12</ecNumber>
    </recommendedName>
    <alternativeName>
        <fullName evidence="1">Aspartyl-tRNA synthetase</fullName>
        <shortName evidence="1">AspRS</shortName>
    </alternativeName>
</protein>
<evidence type="ECO:0000255" key="1">
    <source>
        <dbReference type="HAMAP-Rule" id="MF_00044"/>
    </source>
</evidence>
<keyword id="KW-0030">Aminoacyl-tRNA synthetase</keyword>
<keyword id="KW-0067">ATP-binding</keyword>
<keyword id="KW-0963">Cytoplasm</keyword>
<keyword id="KW-0436">Ligase</keyword>
<keyword id="KW-0547">Nucleotide-binding</keyword>
<keyword id="KW-0648">Protein biosynthesis</keyword>
<feature type="chain" id="PRO_1000074720" description="Aspartate--tRNA ligase">
    <location>
        <begin position="1"/>
        <end position="592"/>
    </location>
</feature>
<feature type="region of interest" description="Aspartate" evidence="1">
    <location>
        <begin position="197"/>
        <end position="200"/>
    </location>
</feature>
<feature type="binding site" evidence="1">
    <location>
        <position position="173"/>
    </location>
    <ligand>
        <name>L-aspartate</name>
        <dbReference type="ChEBI" id="CHEBI:29991"/>
    </ligand>
</feature>
<feature type="binding site" evidence="1">
    <location>
        <begin position="219"/>
        <end position="221"/>
    </location>
    <ligand>
        <name>ATP</name>
        <dbReference type="ChEBI" id="CHEBI:30616"/>
    </ligand>
</feature>
<feature type="binding site" evidence="1">
    <location>
        <position position="219"/>
    </location>
    <ligand>
        <name>L-aspartate</name>
        <dbReference type="ChEBI" id="CHEBI:29991"/>
    </ligand>
</feature>
<feature type="binding site" evidence="1">
    <location>
        <position position="228"/>
    </location>
    <ligand>
        <name>ATP</name>
        <dbReference type="ChEBI" id="CHEBI:30616"/>
    </ligand>
</feature>
<feature type="binding site" evidence="1">
    <location>
        <position position="448"/>
    </location>
    <ligand>
        <name>L-aspartate</name>
        <dbReference type="ChEBI" id="CHEBI:29991"/>
    </ligand>
</feature>
<feature type="binding site" evidence="1">
    <location>
        <position position="482"/>
    </location>
    <ligand>
        <name>ATP</name>
        <dbReference type="ChEBI" id="CHEBI:30616"/>
    </ligand>
</feature>
<feature type="binding site" evidence="1">
    <location>
        <position position="489"/>
    </location>
    <ligand>
        <name>L-aspartate</name>
        <dbReference type="ChEBI" id="CHEBI:29991"/>
    </ligand>
</feature>
<feature type="binding site" evidence="1">
    <location>
        <begin position="534"/>
        <end position="537"/>
    </location>
    <ligand>
        <name>ATP</name>
        <dbReference type="ChEBI" id="CHEBI:30616"/>
    </ligand>
</feature>
<name>SYD_SHEB9</name>
<organism>
    <name type="scientific">Shewanella baltica (strain OS195)</name>
    <dbReference type="NCBI Taxonomy" id="399599"/>
    <lineage>
        <taxon>Bacteria</taxon>
        <taxon>Pseudomonadati</taxon>
        <taxon>Pseudomonadota</taxon>
        <taxon>Gammaproteobacteria</taxon>
        <taxon>Alteromonadales</taxon>
        <taxon>Shewanellaceae</taxon>
        <taxon>Shewanella</taxon>
    </lineage>
</organism>
<comment type="function">
    <text evidence="1">Catalyzes the attachment of L-aspartate to tRNA(Asp) in a two-step reaction: L-aspartate is first activated by ATP to form Asp-AMP and then transferred to the acceptor end of tRNA(Asp).</text>
</comment>
<comment type="catalytic activity">
    <reaction evidence="1">
        <text>tRNA(Asp) + L-aspartate + ATP = L-aspartyl-tRNA(Asp) + AMP + diphosphate</text>
        <dbReference type="Rhea" id="RHEA:19649"/>
        <dbReference type="Rhea" id="RHEA-COMP:9660"/>
        <dbReference type="Rhea" id="RHEA-COMP:9678"/>
        <dbReference type="ChEBI" id="CHEBI:29991"/>
        <dbReference type="ChEBI" id="CHEBI:30616"/>
        <dbReference type="ChEBI" id="CHEBI:33019"/>
        <dbReference type="ChEBI" id="CHEBI:78442"/>
        <dbReference type="ChEBI" id="CHEBI:78516"/>
        <dbReference type="ChEBI" id="CHEBI:456215"/>
        <dbReference type="EC" id="6.1.1.12"/>
    </reaction>
</comment>
<comment type="subunit">
    <text evidence="1">Homodimer.</text>
</comment>
<comment type="subcellular location">
    <subcellularLocation>
        <location evidence="1">Cytoplasm</location>
    </subcellularLocation>
</comment>
<comment type="similarity">
    <text evidence="1">Belongs to the class-II aminoacyl-tRNA synthetase family. Type 1 subfamily.</text>
</comment>